<evidence type="ECO:0000250" key="1"/>
<evidence type="ECO:0000255" key="2">
    <source>
        <dbReference type="HAMAP-Rule" id="MF_00118"/>
    </source>
</evidence>
<organism>
    <name type="scientific">Bartonella quintana (strain Toulouse)</name>
    <name type="common">Rochalimaea quintana</name>
    <dbReference type="NCBI Taxonomy" id="283165"/>
    <lineage>
        <taxon>Bacteria</taxon>
        <taxon>Pseudomonadati</taxon>
        <taxon>Pseudomonadota</taxon>
        <taxon>Alphaproteobacteria</taxon>
        <taxon>Hyphomicrobiales</taxon>
        <taxon>Bartonellaceae</taxon>
        <taxon>Bartonella</taxon>
    </lineage>
</organism>
<name>EFTU1_BARQU</name>
<keyword id="KW-0963">Cytoplasm</keyword>
<keyword id="KW-0251">Elongation factor</keyword>
<keyword id="KW-0342">GTP-binding</keyword>
<keyword id="KW-0378">Hydrolase</keyword>
<keyword id="KW-0460">Magnesium</keyword>
<keyword id="KW-0479">Metal-binding</keyword>
<keyword id="KW-0547">Nucleotide-binding</keyword>
<keyword id="KW-0648">Protein biosynthesis</keyword>
<reference key="1">
    <citation type="journal article" date="2004" name="Proc. Natl. Acad. Sci. U.S.A.">
        <title>The louse-borne human pathogen Bartonella quintana is a genomic derivative of the zoonotic agent Bartonella henselae.</title>
        <authorList>
            <person name="Alsmark U.C.M."/>
            <person name="Frank A.C."/>
            <person name="Karlberg E.O."/>
            <person name="Legault B.-A."/>
            <person name="Ardell D.H."/>
            <person name="Canbaeck B."/>
            <person name="Eriksson A.-S."/>
            <person name="Naeslund A.K."/>
            <person name="Handley S.A."/>
            <person name="Huvet M."/>
            <person name="La Scola B."/>
            <person name="Holmberg M."/>
            <person name="Andersson S.G.E."/>
        </authorList>
    </citation>
    <scope>NUCLEOTIDE SEQUENCE [LARGE SCALE GENOMIC DNA]</scope>
    <source>
        <strain>Toulouse</strain>
    </source>
</reference>
<accession>Q6FZC0</accession>
<dbReference type="EC" id="3.6.5.3" evidence="2"/>
<dbReference type="EMBL" id="BX897700">
    <property type="protein sequence ID" value="CAF26308.1"/>
    <property type="molecule type" value="Genomic_DNA"/>
</dbReference>
<dbReference type="SMR" id="Q6FZC0"/>
<dbReference type="KEGG" id="bqu:BQ08250"/>
<dbReference type="eggNOG" id="COG0050">
    <property type="taxonomic scope" value="Bacteria"/>
</dbReference>
<dbReference type="HOGENOM" id="CLU_007265_0_0_5"/>
<dbReference type="OrthoDB" id="9803139at2"/>
<dbReference type="Proteomes" id="UP000000597">
    <property type="component" value="Chromosome"/>
</dbReference>
<dbReference type="GO" id="GO:0005829">
    <property type="term" value="C:cytosol"/>
    <property type="evidence" value="ECO:0007669"/>
    <property type="project" value="TreeGrafter"/>
</dbReference>
<dbReference type="GO" id="GO:0005525">
    <property type="term" value="F:GTP binding"/>
    <property type="evidence" value="ECO:0007669"/>
    <property type="project" value="UniProtKB-UniRule"/>
</dbReference>
<dbReference type="GO" id="GO:0003924">
    <property type="term" value="F:GTPase activity"/>
    <property type="evidence" value="ECO:0007669"/>
    <property type="project" value="InterPro"/>
</dbReference>
<dbReference type="GO" id="GO:0097216">
    <property type="term" value="F:guanosine tetraphosphate binding"/>
    <property type="evidence" value="ECO:0007669"/>
    <property type="project" value="UniProtKB-ARBA"/>
</dbReference>
<dbReference type="GO" id="GO:0003746">
    <property type="term" value="F:translation elongation factor activity"/>
    <property type="evidence" value="ECO:0007669"/>
    <property type="project" value="UniProtKB-UniRule"/>
</dbReference>
<dbReference type="CDD" id="cd01884">
    <property type="entry name" value="EF_Tu"/>
    <property type="match status" value="1"/>
</dbReference>
<dbReference type="CDD" id="cd03697">
    <property type="entry name" value="EFTU_II"/>
    <property type="match status" value="1"/>
</dbReference>
<dbReference type="CDD" id="cd03707">
    <property type="entry name" value="EFTU_III"/>
    <property type="match status" value="1"/>
</dbReference>
<dbReference type="FunFam" id="2.40.30.10:FF:000001">
    <property type="entry name" value="Elongation factor Tu"/>
    <property type="match status" value="1"/>
</dbReference>
<dbReference type="FunFam" id="3.40.50.300:FF:000003">
    <property type="entry name" value="Elongation factor Tu"/>
    <property type="match status" value="1"/>
</dbReference>
<dbReference type="Gene3D" id="3.40.50.300">
    <property type="entry name" value="P-loop containing nucleotide triphosphate hydrolases"/>
    <property type="match status" value="1"/>
</dbReference>
<dbReference type="Gene3D" id="2.40.30.10">
    <property type="entry name" value="Translation factors"/>
    <property type="match status" value="2"/>
</dbReference>
<dbReference type="HAMAP" id="MF_00118_B">
    <property type="entry name" value="EF_Tu_B"/>
    <property type="match status" value="1"/>
</dbReference>
<dbReference type="InterPro" id="IPR041709">
    <property type="entry name" value="EF-Tu_GTP-bd"/>
</dbReference>
<dbReference type="InterPro" id="IPR050055">
    <property type="entry name" value="EF-Tu_GTPase"/>
</dbReference>
<dbReference type="InterPro" id="IPR004161">
    <property type="entry name" value="EFTu-like_2"/>
</dbReference>
<dbReference type="InterPro" id="IPR033720">
    <property type="entry name" value="EFTU_2"/>
</dbReference>
<dbReference type="InterPro" id="IPR031157">
    <property type="entry name" value="G_TR_CS"/>
</dbReference>
<dbReference type="InterPro" id="IPR027417">
    <property type="entry name" value="P-loop_NTPase"/>
</dbReference>
<dbReference type="InterPro" id="IPR005225">
    <property type="entry name" value="Small_GTP-bd"/>
</dbReference>
<dbReference type="InterPro" id="IPR000795">
    <property type="entry name" value="T_Tr_GTP-bd_dom"/>
</dbReference>
<dbReference type="InterPro" id="IPR009000">
    <property type="entry name" value="Transl_B-barrel_sf"/>
</dbReference>
<dbReference type="InterPro" id="IPR009001">
    <property type="entry name" value="Transl_elong_EF1A/Init_IF2_C"/>
</dbReference>
<dbReference type="InterPro" id="IPR004541">
    <property type="entry name" value="Transl_elong_EFTu/EF1A_bac/org"/>
</dbReference>
<dbReference type="InterPro" id="IPR004160">
    <property type="entry name" value="Transl_elong_EFTu/EF1A_C"/>
</dbReference>
<dbReference type="NCBIfam" id="TIGR00485">
    <property type="entry name" value="EF-Tu"/>
    <property type="match status" value="1"/>
</dbReference>
<dbReference type="NCBIfam" id="NF000766">
    <property type="entry name" value="PRK00049.1"/>
    <property type="match status" value="1"/>
</dbReference>
<dbReference type="NCBIfam" id="NF009372">
    <property type="entry name" value="PRK12735.1"/>
    <property type="match status" value="1"/>
</dbReference>
<dbReference type="NCBIfam" id="NF009373">
    <property type="entry name" value="PRK12736.1"/>
    <property type="match status" value="1"/>
</dbReference>
<dbReference type="NCBIfam" id="TIGR00231">
    <property type="entry name" value="small_GTP"/>
    <property type="match status" value="1"/>
</dbReference>
<dbReference type="PANTHER" id="PTHR43721:SF22">
    <property type="entry name" value="ELONGATION FACTOR TU, MITOCHONDRIAL"/>
    <property type="match status" value="1"/>
</dbReference>
<dbReference type="PANTHER" id="PTHR43721">
    <property type="entry name" value="ELONGATION FACTOR TU-RELATED"/>
    <property type="match status" value="1"/>
</dbReference>
<dbReference type="Pfam" id="PF00009">
    <property type="entry name" value="GTP_EFTU"/>
    <property type="match status" value="1"/>
</dbReference>
<dbReference type="Pfam" id="PF03144">
    <property type="entry name" value="GTP_EFTU_D2"/>
    <property type="match status" value="1"/>
</dbReference>
<dbReference type="Pfam" id="PF03143">
    <property type="entry name" value="GTP_EFTU_D3"/>
    <property type="match status" value="1"/>
</dbReference>
<dbReference type="PRINTS" id="PR00315">
    <property type="entry name" value="ELONGATNFCT"/>
</dbReference>
<dbReference type="SUPFAM" id="SSF50465">
    <property type="entry name" value="EF-Tu/eEF-1alpha/eIF2-gamma C-terminal domain"/>
    <property type="match status" value="1"/>
</dbReference>
<dbReference type="SUPFAM" id="SSF52540">
    <property type="entry name" value="P-loop containing nucleoside triphosphate hydrolases"/>
    <property type="match status" value="1"/>
</dbReference>
<dbReference type="SUPFAM" id="SSF50447">
    <property type="entry name" value="Translation proteins"/>
    <property type="match status" value="1"/>
</dbReference>
<dbReference type="PROSITE" id="PS00301">
    <property type="entry name" value="G_TR_1"/>
    <property type="match status" value="1"/>
</dbReference>
<dbReference type="PROSITE" id="PS51722">
    <property type="entry name" value="G_TR_2"/>
    <property type="match status" value="1"/>
</dbReference>
<sequence length="391" mass="42860">MAKSKFERTKPHVNIGTIGHVDHGKTSLTAAITKYFGEFKAYDQIDAAPEERARGITISTAHVEYETEKRHYAHVDCPGHADYVKNMITGAAQMDGAILVVSAADGPMPQTREHILLARQVGVPAIVVFLNKVDQVDDAELLELVELEIRELLSKYDFPGDDIPIVKGSALAALEDKDKSIGEDAVRLLMSEVDNYIPTPERPVDQPFLLPIEDVFSISGRGTVVTGRVERGVIKVGEEIEIIGIRPTSKTTVTGVEMFRKLLDQGQAGDNIGALLRGVDREGIERGQVLAKPGSVTPHTRFKAEAYILTKDEGGRHTPFFTNYRPQFYFRTTDVTGIVTLPEGIEMVMPGDNVAMDVSLIVPIAMEEKLRFAIREGGRTVGAGIVSKIIE</sequence>
<proteinExistence type="inferred from homology"/>
<gene>
    <name evidence="2" type="primary">tuf1</name>
    <name type="ordered locus">BQ08250</name>
</gene>
<feature type="chain" id="PRO_0000337323" description="Elongation factor Tu 1">
    <location>
        <begin position="1"/>
        <end position="391"/>
    </location>
</feature>
<feature type="domain" description="tr-type G">
    <location>
        <begin position="10"/>
        <end position="201"/>
    </location>
</feature>
<feature type="region of interest" description="G1" evidence="1">
    <location>
        <begin position="19"/>
        <end position="26"/>
    </location>
</feature>
<feature type="region of interest" description="G2" evidence="1">
    <location>
        <begin position="55"/>
        <end position="59"/>
    </location>
</feature>
<feature type="region of interest" description="G3" evidence="1">
    <location>
        <begin position="76"/>
        <end position="79"/>
    </location>
</feature>
<feature type="region of interest" description="G4" evidence="1">
    <location>
        <begin position="131"/>
        <end position="134"/>
    </location>
</feature>
<feature type="region of interest" description="G5" evidence="1">
    <location>
        <begin position="169"/>
        <end position="171"/>
    </location>
</feature>
<feature type="binding site" evidence="2">
    <location>
        <begin position="19"/>
        <end position="26"/>
    </location>
    <ligand>
        <name>GTP</name>
        <dbReference type="ChEBI" id="CHEBI:37565"/>
    </ligand>
</feature>
<feature type="binding site" evidence="2">
    <location>
        <position position="26"/>
    </location>
    <ligand>
        <name>Mg(2+)</name>
        <dbReference type="ChEBI" id="CHEBI:18420"/>
    </ligand>
</feature>
<feature type="binding site" evidence="2">
    <location>
        <begin position="76"/>
        <end position="80"/>
    </location>
    <ligand>
        <name>GTP</name>
        <dbReference type="ChEBI" id="CHEBI:37565"/>
    </ligand>
</feature>
<feature type="binding site" evidence="2">
    <location>
        <begin position="131"/>
        <end position="134"/>
    </location>
    <ligand>
        <name>GTP</name>
        <dbReference type="ChEBI" id="CHEBI:37565"/>
    </ligand>
</feature>
<comment type="function">
    <text evidence="2">GTP hydrolase that promotes the GTP-dependent binding of aminoacyl-tRNA to the A-site of ribosomes during protein biosynthesis.</text>
</comment>
<comment type="catalytic activity">
    <reaction evidence="2">
        <text>GTP + H2O = GDP + phosphate + H(+)</text>
        <dbReference type="Rhea" id="RHEA:19669"/>
        <dbReference type="ChEBI" id="CHEBI:15377"/>
        <dbReference type="ChEBI" id="CHEBI:15378"/>
        <dbReference type="ChEBI" id="CHEBI:37565"/>
        <dbReference type="ChEBI" id="CHEBI:43474"/>
        <dbReference type="ChEBI" id="CHEBI:58189"/>
        <dbReference type="EC" id="3.6.5.3"/>
    </reaction>
    <physiologicalReaction direction="left-to-right" evidence="2">
        <dbReference type="Rhea" id="RHEA:19670"/>
    </physiologicalReaction>
</comment>
<comment type="subunit">
    <text evidence="2">Monomer.</text>
</comment>
<comment type="subcellular location">
    <subcellularLocation>
        <location evidence="2">Cytoplasm</location>
    </subcellularLocation>
</comment>
<comment type="similarity">
    <text evidence="2">Belongs to the TRAFAC class translation factor GTPase superfamily. Classic translation factor GTPase family. EF-Tu/EF-1A subfamily.</text>
</comment>
<protein>
    <recommendedName>
        <fullName evidence="2">Elongation factor Tu 1</fullName>
        <shortName evidence="2">EF-Tu 1</shortName>
        <ecNumber evidence="2">3.6.5.3</ecNumber>
    </recommendedName>
</protein>